<evidence type="ECO:0000255" key="1">
    <source>
        <dbReference type="HAMAP-Rule" id="MF_00128"/>
    </source>
</evidence>
<accession>C6DC61</accession>
<name>NRDI_PECCP</name>
<organism>
    <name type="scientific">Pectobacterium carotovorum subsp. carotovorum (strain PC1)</name>
    <dbReference type="NCBI Taxonomy" id="561230"/>
    <lineage>
        <taxon>Bacteria</taxon>
        <taxon>Pseudomonadati</taxon>
        <taxon>Pseudomonadota</taxon>
        <taxon>Gammaproteobacteria</taxon>
        <taxon>Enterobacterales</taxon>
        <taxon>Pectobacteriaceae</taxon>
        <taxon>Pectobacterium</taxon>
    </lineage>
</organism>
<gene>
    <name evidence="1" type="primary">nrdI</name>
    <name type="ordered locus">PC1_3132</name>
</gene>
<sequence length="135" mass="14899">MNPLVYFSSQSENTHRFISRVGLPALRIPIATEQPALKVDRPYILVVPSYGGGSTKGAVPRQVIIFLNDPHNRAYLRGVIAAGNTNFGAAYCIAGDIIAQKCQVPYLYRFELLGTAEDVANVRKGVTEFWQQQTT</sequence>
<reference key="1">
    <citation type="submission" date="2009-07" db="EMBL/GenBank/DDBJ databases">
        <title>Complete sequence of Pectobacterium carotovorum subsp. carotovorum PC1.</title>
        <authorList>
            <consortium name="US DOE Joint Genome Institute"/>
            <person name="Lucas S."/>
            <person name="Copeland A."/>
            <person name="Lapidus A."/>
            <person name="Glavina del Rio T."/>
            <person name="Tice H."/>
            <person name="Bruce D."/>
            <person name="Goodwin L."/>
            <person name="Pitluck S."/>
            <person name="Munk A.C."/>
            <person name="Brettin T."/>
            <person name="Detter J.C."/>
            <person name="Han C."/>
            <person name="Tapia R."/>
            <person name="Larimer F."/>
            <person name="Land M."/>
            <person name="Hauser L."/>
            <person name="Kyrpides N."/>
            <person name="Mikhailova N."/>
            <person name="Balakrishnan V."/>
            <person name="Glasner J."/>
            <person name="Perna N.T."/>
        </authorList>
    </citation>
    <scope>NUCLEOTIDE SEQUENCE [LARGE SCALE GENOMIC DNA]</scope>
    <source>
        <strain>PC1</strain>
    </source>
</reference>
<feature type="chain" id="PRO_1000203157" description="Protein NrdI">
    <location>
        <begin position="1"/>
        <end position="135"/>
    </location>
</feature>
<protein>
    <recommendedName>
        <fullName evidence="1">Protein NrdI</fullName>
    </recommendedName>
</protein>
<comment type="function">
    <text evidence="1">Probably involved in ribonucleotide reductase function.</text>
</comment>
<comment type="similarity">
    <text evidence="1">Belongs to the NrdI family.</text>
</comment>
<dbReference type="EMBL" id="CP001657">
    <property type="protein sequence ID" value="ACT14155.1"/>
    <property type="molecule type" value="Genomic_DNA"/>
</dbReference>
<dbReference type="RefSeq" id="WP_010280810.1">
    <property type="nucleotide sequence ID" value="NC_012917.1"/>
</dbReference>
<dbReference type="SMR" id="C6DC61"/>
<dbReference type="STRING" id="561230.PC1_3132"/>
<dbReference type="GeneID" id="90764484"/>
<dbReference type="KEGG" id="pct:PC1_3132"/>
<dbReference type="eggNOG" id="COG1780">
    <property type="taxonomic scope" value="Bacteria"/>
</dbReference>
<dbReference type="HOGENOM" id="CLU_114845_0_0_6"/>
<dbReference type="OrthoDB" id="350535at2"/>
<dbReference type="Proteomes" id="UP000002736">
    <property type="component" value="Chromosome"/>
</dbReference>
<dbReference type="GO" id="GO:0010181">
    <property type="term" value="F:FMN binding"/>
    <property type="evidence" value="ECO:0007669"/>
    <property type="project" value="InterPro"/>
</dbReference>
<dbReference type="GO" id="GO:0036211">
    <property type="term" value="P:protein modification process"/>
    <property type="evidence" value="ECO:0007669"/>
    <property type="project" value="InterPro"/>
</dbReference>
<dbReference type="FunFam" id="3.40.50.360:FF:000005">
    <property type="entry name" value="Protein NrdI"/>
    <property type="match status" value="1"/>
</dbReference>
<dbReference type="Gene3D" id="3.40.50.360">
    <property type="match status" value="1"/>
</dbReference>
<dbReference type="HAMAP" id="MF_00128">
    <property type="entry name" value="NrdI"/>
    <property type="match status" value="1"/>
</dbReference>
<dbReference type="InterPro" id="IPR029039">
    <property type="entry name" value="Flavoprotein-like_sf"/>
</dbReference>
<dbReference type="InterPro" id="IPR020852">
    <property type="entry name" value="RNR_Ib_NrdI_bac"/>
</dbReference>
<dbReference type="InterPro" id="IPR004465">
    <property type="entry name" value="RNR_NrdI"/>
</dbReference>
<dbReference type="NCBIfam" id="TIGR00333">
    <property type="entry name" value="nrdI"/>
    <property type="match status" value="1"/>
</dbReference>
<dbReference type="PANTHER" id="PTHR37297">
    <property type="entry name" value="PROTEIN NRDI"/>
    <property type="match status" value="1"/>
</dbReference>
<dbReference type="PANTHER" id="PTHR37297:SF1">
    <property type="entry name" value="PROTEIN NRDI"/>
    <property type="match status" value="1"/>
</dbReference>
<dbReference type="Pfam" id="PF07972">
    <property type="entry name" value="Flavodoxin_NdrI"/>
    <property type="match status" value="1"/>
</dbReference>
<dbReference type="PIRSF" id="PIRSF005087">
    <property type="entry name" value="NrdI"/>
    <property type="match status" value="1"/>
</dbReference>
<dbReference type="SUPFAM" id="SSF52218">
    <property type="entry name" value="Flavoproteins"/>
    <property type="match status" value="1"/>
</dbReference>
<proteinExistence type="inferred from homology"/>